<feature type="chain" id="PRO_0000100518" description="Phosphoribosylformylglycinamidine synthase subunit PurL">
    <location>
        <begin position="1"/>
        <end position="741"/>
    </location>
</feature>
<feature type="active site" evidence="1">
    <location>
        <position position="54"/>
    </location>
</feature>
<feature type="active site" description="Proton acceptor" evidence="1">
    <location>
        <position position="102"/>
    </location>
</feature>
<feature type="binding site" evidence="1">
    <location>
        <position position="57"/>
    </location>
    <ligand>
        <name>ATP</name>
        <dbReference type="ChEBI" id="CHEBI:30616"/>
    </ligand>
</feature>
<feature type="binding site" evidence="1">
    <location>
        <position position="98"/>
    </location>
    <ligand>
        <name>ATP</name>
        <dbReference type="ChEBI" id="CHEBI:30616"/>
    </ligand>
</feature>
<feature type="binding site" evidence="1">
    <location>
        <position position="100"/>
    </location>
    <ligand>
        <name>Mg(2+)</name>
        <dbReference type="ChEBI" id="CHEBI:18420"/>
        <label>1</label>
    </ligand>
</feature>
<feature type="binding site" evidence="1">
    <location>
        <begin position="101"/>
        <end position="104"/>
    </location>
    <ligand>
        <name>substrate</name>
    </ligand>
</feature>
<feature type="binding site" evidence="1">
    <location>
        <position position="123"/>
    </location>
    <ligand>
        <name>substrate</name>
    </ligand>
</feature>
<feature type="binding site" evidence="1">
    <location>
        <position position="124"/>
    </location>
    <ligand>
        <name>Mg(2+)</name>
        <dbReference type="ChEBI" id="CHEBI:18420"/>
        <label>2</label>
    </ligand>
</feature>
<feature type="binding site" evidence="1">
    <location>
        <position position="251"/>
    </location>
    <ligand>
        <name>substrate</name>
    </ligand>
</feature>
<feature type="binding site" evidence="1">
    <location>
        <position position="279"/>
    </location>
    <ligand>
        <name>Mg(2+)</name>
        <dbReference type="ChEBI" id="CHEBI:18420"/>
        <label>2</label>
    </ligand>
</feature>
<feature type="binding site" evidence="1">
    <location>
        <begin position="323"/>
        <end position="325"/>
    </location>
    <ligand>
        <name>substrate</name>
    </ligand>
</feature>
<feature type="binding site" evidence="1">
    <location>
        <position position="510"/>
    </location>
    <ligand>
        <name>ATP</name>
        <dbReference type="ChEBI" id="CHEBI:30616"/>
    </ligand>
</feature>
<feature type="binding site" evidence="1">
    <location>
        <position position="547"/>
    </location>
    <ligand>
        <name>ATP</name>
        <dbReference type="ChEBI" id="CHEBI:30616"/>
    </ligand>
</feature>
<feature type="binding site" evidence="1">
    <location>
        <position position="548"/>
    </location>
    <ligand>
        <name>Mg(2+)</name>
        <dbReference type="ChEBI" id="CHEBI:18420"/>
        <label>1</label>
    </ligand>
</feature>
<feature type="binding site" evidence="1">
    <location>
        <position position="550"/>
    </location>
    <ligand>
        <name>substrate</name>
    </ligand>
</feature>
<evidence type="ECO:0000255" key="1">
    <source>
        <dbReference type="HAMAP-Rule" id="MF_00420"/>
    </source>
</evidence>
<reference key="1">
    <citation type="journal article" date="2004" name="Proc. Natl. Acad. Sci. U.S.A.">
        <title>Genome sequence of Picrophilus torridus and its implications for life around pH 0.</title>
        <authorList>
            <person name="Fuetterer O."/>
            <person name="Angelov A."/>
            <person name="Liesegang H."/>
            <person name="Gottschalk G."/>
            <person name="Schleper C."/>
            <person name="Schepers B."/>
            <person name="Dock C."/>
            <person name="Antranikian G."/>
            <person name="Liebl W."/>
        </authorList>
    </citation>
    <scope>NUCLEOTIDE SEQUENCE [LARGE SCALE GENOMIC DNA]</scope>
    <source>
        <strain>ATCC 700027 / DSM 9790 / JCM 10055 / NBRC 100828 / KAW 2/3</strain>
    </source>
</reference>
<organism>
    <name type="scientific">Picrophilus torridus (strain ATCC 700027 / DSM 9790 / JCM 10055 / NBRC 100828 / KAW 2/3)</name>
    <dbReference type="NCBI Taxonomy" id="1122961"/>
    <lineage>
        <taxon>Archaea</taxon>
        <taxon>Methanobacteriati</taxon>
        <taxon>Thermoplasmatota</taxon>
        <taxon>Thermoplasmata</taxon>
        <taxon>Thermoplasmatales</taxon>
        <taxon>Picrophilaceae</taxon>
        <taxon>Picrophilus</taxon>
    </lineage>
</organism>
<name>PURL_PICTO</name>
<proteinExistence type="inferred from homology"/>
<sequence>MDIINCSDNDLDLIGKSLALSHDEMLLIKKYFTEIKRNPSDVELQAIAQSWSEHSCYKSSKFYLKKYLSNLRNERTILAMEDDAGVVKFNDDYVYVVKMESHNHPSAVEPYGGAATGVGGIIRDVLCMGAQPVALVDSLYFGDPDNKSGFLSERFIINGVVSGIRDYGNRLGIPNVAGSIYFHEGYNTSPIVNAGCIGISRKDKIVRSRVQKARDILILCGGRTGRDGIHGVNFASRVLDLKNGENRNAVQLGNPIVEEPLIHAILELNDLGLITGMKDLGGGGLSSAVTEMLYAGNLGGTINLDSVLLKDDNMLPWEIWISESQERMLISSDERNLPQIKDVLDKWNIEFSVIGRAEEKKNLEIYYKNEKVFDLPLEFISKTPVYQRPYKKPRNRCKSEPFRDDDINKSIISLISSINVCSRAPVIRQYDHTVRGATIVRPLTGLPNNETHSDAAVIKPVDDSFAGIAVTSGSKPMLCTIDPYGGALESLIEAYKNIIVTGAEPDAIVDSLNFGNPENEETMYSFVETLKAIRDFTLKFKLQLVSGNVSFYNKNVSDIMPTPNIMMTGIIDDVRKAITTEFKNKNSLIYLIGSINGSLAGTVYSKLKDIKCYDYHNSNINDLCNVYNIIKENKEKILAAHDVSDGGIIAALIEMSFGKNIGFNVNLKDIKMNLENKLFSEHGTAIVIEVPLESEIVFNNLGIKLGYTCDDITVMDGENMVFNARISELKNLWDSGLGKYL</sequence>
<keyword id="KW-0067">ATP-binding</keyword>
<keyword id="KW-0963">Cytoplasm</keyword>
<keyword id="KW-0436">Ligase</keyword>
<keyword id="KW-0460">Magnesium</keyword>
<keyword id="KW-0479">Metal-binding</keyword>
<keyword id="KW-0547">Nucleotide-binding</keyword>
<keyword id="KW-0658">Purine biosynthesis</keyword>
<gene>
    <name evidence="1" type="primary">purL</name>
    <name type="ordered locus">PTO1205</name>
</gene>
<protein>
    <recommendedName>
        <fullName evidence="1">Phosphoribosylformylglycinamidine synthase subunit PurL</fullName>
        <shortName evidence="1">FGAM synthase</shortName>
        <ecNumber evidence="1">6.3.5.3</ecNumber>
    </recommendedName>
    <alternativeName>
        <fullName evidence="1">Formylglycinamide ribonucleotide amidotransferase subunit II</fullName>
        <shortName evidence="1">FGAR amidotransferase II</shortName>
        <shortName evidence="1">FGAR-AT II</shortName>
    </alternativeName>
    <alternativeName>
        <fullName evidence="1">Glutamine amidotransferase PurL</fullName>
    </alternativeName>
    <alternativeName>
        <fullName evidence="1">Phosphoribosylformylglycinamidine synthase subunit II</fullName>
    </alternativeName>
</protein>
<dbReference type="EC" id="6.3.5.3" evidence="1"/>
<dbReference type="EMBL" id="AE017261">
    <property type="protein sequence ID" value="AAT43790.1"/>
    <property type="molecule type" value="Genomic_DNA"/>
</dbReference>
<dbReference type="RefSeq" id="WP_011178006.1">
    <property type="nucleotide sequence ID" value="NC_005877.1"/>
</dbReference>
<dbReference type="SMR" id="Q6KZR2"/>
<dbReference type="FunCoup" id="Q6KZR2">
    <property type="interactions" value="142"/>
</dbReference>
<dbReference type="STRING" id="263820.PTO1205"/>
<dbReference type="PaxDb" id="263820-PTO1205"/>
<dbReference type="GeneID" id="2844297"/>
<dbReference type="KEGG" id="pto:PTO1205"/>
<dbReference type="PATRIC" id="fig|263820.9.peg.1252"/>
<dbReference type="eggNOG" id="arCOG00641">
    <property type="taxonomic scope" value="Archaea"/>
</dbReference>
<dbReference type="HOGENOM" id="CLU_003100_0_1_2"/>
<dbReference type="InParanoid" id="Q6KZR2"/>
<dbReference type="OrthoDB" id="8251at2157"/>
<dbReference type="UniPathway" id="UPA00074">
    <property type="reaction ID" value="UER00128"/>
</dbReference>
<dbReference type="Proteomes" id="UP000000438">
    <property type="component" value="Chromosome"/>
</dbReference>
<dbReference type="GO" id="GO:0005737">
    <property type="term" value="C:cytoplasm"/>
    <property type="evidence" value="ECO:0007669"/>
    <property type="project" value="UniProtKB-SubCell"/>
</dbReference>
<dbReference type="GO" id="GO:0005524">
    <property type="term" value="F:ATP binding"/>
    <property type="evidence" value="ECO:0007669"/>
    <property type="project" value="UniProtKB-UniRule"/>
</dbReference>
<dbReference type="GO" id="GO:0000287">
    <property type="term" value="F:magnesium ion binding"/>
    <property type="evidence" value="ECO:0007669"/>
    <property type="project" value="UniProtKB-UniRule"/>
</dbReference>
<dbReference type="GO" id="GO:0004642">
    <property type="term" value="F:phosphoribosylformylglycinamidine synthase activity"/>
    <property type="evidence" value="ECO:0007669"/>
    <property type="project" value="UniProtKB-UniRule"/>
</dbReference>
<dbReference type="GO" id="GO:0006189">
    <property type="term" value="P:'de novo' IMP biosynthetic process"/>
    <property type="evidence" value="ECO:0007669"/>
    <property type="project" value="UniProtKB-UniRule"/>
</dbReference>
<dbReference type="CDD" id="cd02203">
    <property type="entry name" value="PurL_repeat1"/>
    <property type="match status" value="1"/>
</dbReference>
<dbReference type="CDD" id="cd02204">
    <property type="entry name" value="PurL_repeat2"/>
    <property type="match status" value="1"/>
</dbReference>
<dbReference type="Gene3D" id="1.10.8.750">
    <property type="entry name" value="Phosphoribosylformylglycinamidine synthase, linker domain"/>
    <property type="match status" value="1"/>
</dbReference>
<dbReference type="Gene3D" id="3.90.650.10">
    <property type="entry name" value="PurM-like C-terminal domain"/>
    <property type="match status" value="2"/>
</dbReference>
<dbReference type="Gene3D" id="3.30.1330.10">
    <property type="entry name" value="PurM-like, N-terminal domain"/>
    <property type="match status" value="2"/>
</dbReference>
<dbReference type="HAMAP" id="MF_00420">
    <property type="entry name" value="PurL_2"/>
    <property type="match status" value="1"/>
</dbReference>
<dbReference type="InterPro" id="IPR010074">
    <property type="entry name" value="PRibForGlyAmidine_synth_PurL"/>
</dbReference>
<dbReference type="InterPro" id="IPR041609">
    <property type="entry name" value="PurL_linker"/>
</dbReference>
<dbReference type="InterPro" id="IPR010918">
    <property type="entry name" value="PurM-like_C_dom"/>
</dbReference>
<dbReference type="InterPro" id="IPR036676">
    <property type="entry name" value="PurM-like_C_sf"/>
</dbReference>
<dbReference type="InterPro" id="IPR016188">
    <property type="entry name" value="PurM-like_N"/>
</dbReference>
<dbReference type="InterPro" id="IPR036921">
    <property type="entry name" value="PurM-like_N_sf"/>
</dbReference>
<dbReference type="NCBIfam" id="TIGR01736">
    <property type="entry name" value="FGAM_synth_II"/>
    <property type="match status" value="1"/>
</dbReference>
<dbReference type="NCBIfam" id="NF002290">
    <property type="entry name" value="PRK01213.1"/>
    <property type="match status" value="1"/>
</dbReference>
<dbReference type="PANTHER" id="PTHR43555">
    <property type="entry name" value="PHOSPHORIBOSYLFORMYLGLYCINAMIDINE SYNTHASE SUBUNIT PURL"/>
    <property type="match status" value="1"/>
</dbReference>
<dbReference type="PANTHER" id="PTHR43555:SF1">
    <property type="entry name" value="PHOSPHORIBOSYLFORMYLGLYCINAMIDINE SYNTHASE SUBUNIT PURL"/>
    <property type="match status" value="1"/>
</dbReference>
<dbReference type="Pfam" id="PF00586">
    <property type="entry name" value="AIRS"/>
    <property type="match status" value="2"/>
</dbReference>
<dbReference type="Pfam" id="PF02769">
    <property type="entry name" value="AIRS_C"/>
    <property type="match status" value="2"/>
</dbReference>
<dbReference type="Pfam" id="PF18072">
    <property type="entry name" value="FGAR-AT_linker"/>
    <property type="match status" value="1"/>
</dbReference>
<dbReference type="PIRSF" id="PIRSF001587">
    <property type="entry name" value="FGAM_synthase_II"/>
    <property type="match status" value="1"/>
</dbReference>
<dbReference type="SUPFAM" id="SSF56042">
    <property type="entry name" value="PurM C-terminal domain-like"/>
    <property type="match status" value="2"/>
</dbReference>
<dbReference type="SUPFAM" id="SSF55326">
    <property type="entry name" value="PurM N-terminal domain-like"/>
    <property type="match status" value="2"/>
</dbReference>
<comment type="function">
    <text evidence="1">Part of the phosphoribosylformylglycinamidine synthase complex involved in the purines biosynthetic pathway. Catalyzes the ATP-dependent conversion of formylglycinamide ribonucleotide (FGAR) and glutamine to yield formylglycinamidine ribonucleotide (FGAM) and glutamate. The FGAM synthase complex is composed of three subunits. PurQ produces an ammonia molecule by converting glutamine to glutamate. PurL transfers the ammonia molecule to FGAR to form FGAM in an ATP-dependent manner. PurS interacts with PurQ and PurL and is thought to assist in the transfer of the ammonia molecule from PurQ to PurL.</text>
</comment>
<comment type="catalytic activity">
    <reaction evidence="1">
        <text>N(2)-formyl-N(1)-(5-phospho-beta-D-ribosyl)glycinamide + L-glutamine + ATP + H2O = 2-formamido-N(1)-(5-O-phospho-beta-D-ribosyl)acetamidine + L-glutamate + ADP + phosphate + H(+)</text>
        <dbReference type="Rhea" id="RHEA:17129"/>
        <dbReference type="ChEBI" id="CHEBI:15377"/>
        <dbReference type="ChEBI" id="CHEBI:15378"/>
        <dbReference type="ChEBI" id="CHEBI:29985"/>
        <dbReference type="ChEBI" id="CHEBI:30616"/>
        <dbReference type="ChEBI" id="CHEBI:43474"/>
        <dbReference type="ChEBI" id="CHEBI:58359"/>
        <dbReference type="ChEBI" id="CHEBI:147286"/>
        <dbReference type="ChEBI" id="CHEBI:147287"/>
        <dbReference type="ChEBI" id="CHEBI:456216"/>
        <dbReference type="EC" id="6.3.5.3"/>
    </reaction>
</comment>
<comment type="pathway">
    <text evidence="1">Purine metabolism; IMP biosynthesis via de novo pathway; 5-amino-1-(5-phospho-D-ribosyl)imidazole from N(2)-formyl-N(1)-(5-phospho-D-ribosyl)glycinamide: step 1/2.</text>
</comment>
<comment type="subunit">
    <text evidence="1">Monomer. Part of the FGAM synthase complex composed of 1 PurL, 1 PurQ and 2 PurS subunits.</text>
</comment>
<comment type="subcellular location">
    <subcellularLocation>
        <location evidence="1">Cytoplasm</location>
    </subcellularLocation>
</comment>
<comment type="similarity">
    <text evidence="1">Belongs to the FGAMS family.</text>
</comment>
<accession>Q6KZR2</accession>